<evidence type="ECO:0000255" key="1">
    <source>
        <dbReference type="HAMAP-Rule" id="MF_01343"/>
    </source>
</evidence>
<evidence type="ECO:0000305" key="2"/>
<name>RS15_STRP4</name>
<dbReference type="EMBL" id="CP001015">
    <property type="protein sequence ID" value="ACF56320.1"/>
    <property type="molecule type" value="Genomic_DNA"/>
</dbReference>
<dbReference type="SMR" id="B5E6Q4"/>
<dbReference type="KEGG" id="spx:SPG_1538"/>
<dbReference type="HOGENOM" id="CLU_148518_0_0_9"/>
<dbReference type="GO" id="GO:0022627">
    <property type="term" value="C:cytosolic small ribosomal subunit"/>
    <property type="evidence" value="ECO:0007669"/>
    <property type="project" value="TreeGrafter"/>
</dbReference>
<dbReference type="GO" id="GO:0019843">
    <property type="term" value="F:rRNA binding"/>
    <property type="evidence" value="ECO:0007669"/>
    <property type="project" value="UniProtKB-UniRule"/>
</dbReference>
<dbReference type="GO" id="GO:0003735">
    <property type="term" value="F:structural constituent of ribosome"/>
    <property type="evidence" value="ECO:0007669"/>
    <property type="project" value="InterPro"/>
</dbReference>
<dbReference type="GO" id="GO:0006412">
    <property type="term" value="P:translation"/>
    <property type="evidence" value="ECO:0007669"/>
    <property type="project" value="UniProtKB-UniRule"/>
</dbReference>
<dbReference type="CDD" id="cd00353">
    <property type="entry name" value="Ribosomal_S15p_S13e"/>
    <property type="match status" value="1"/>
</dbReference>
<dbReference type="FunFam" id="1.10.287.10:FF:000002">
    <property type="entry name" value="30S ribosomal protein S15"/>
    <property type="match status" value="1"/>
</dbReference>
<dbReference type="Gene3D" id="6.10.250.3130">
    <property type="match status" value="1"/>
</dbReference>
<dbReference type="Gene3D" id="1.10.287.10">
    <property type="entry name" value="S15/NS1, RNA-binding"/>
    <property type="match status" value="1"/>
</dbReference>
<dbReference type="HAMAP" id="MF_01343_B">
    <property type="entry name" value="Ribosomal_uS15_B"/>
    <property type="match status" value="1"/>
</dbReference>
<dbReference type="InterPro" id="IPR000589">
    <property type="entry name" value="Ribosomal_uS15"/>
</dbReference>
<dbReference type="InterPro" id="IPR005290">
    <property type="entry name" value="Ribosomal_uS15_bac-type"/>
</dbReference>
<dbReference type="InterPro" id="IPR009068">
    <property type="entry name" value="uS15_NS1_RNA-bd_sf"/>
</dbReference>
<dbReference type="NCBIfam" id="TIGR00952">
    <property type="entry name" value="S15_bact"/>
    <property type="match status" value="1"/>
</dbReference>
<dbReference type="PANTHER" id="PTHR23321">
    <property type="entry name" value="RIBOSOMAL PROTEIN S15, BACTERIAL AND ORGANELLAR"/>
    <property type="match status" value="1"/>
</dbReference>
<dbReference type="PANTHER" id="PTHR23321:SF26">
    <property type="entry name" value="SMALL RIBOSOMAL SUBUNIT PROTEIN US15M"/>
    <property type="match status" value="1"/>
</dbReference>
<dbReference type="Pfam" id="PF00312">
    <property type="entry name" value="Ribosomal_S15"/>
    <property type="match status" value="1"/>
</dbReference>
<dbReference type="SMART" id="SM01387">
    <property type="entry name" value="Ribosomal_S15"/>
    <property type="match status" value="1"/>
</dbReference>
<dbReference type="SUPFAM" id="SSF47060">
    <property type="entry name" value="S15/NS1 RNA-binding domain"/>
    <property type="match status" value="1"/>
</dbReference>
<dbReference type="PROSITE" id="PS00362">
    <property type="entry name" value="RIBOSOMAL_S15"/>
    <property type="match status" value="1"/>
</dbReference>
<gene>
    <name evidence="1" type="primary">rpsO</name>
    <name type="ordered locus">SPG_1538</name>
</gene>
<feature type="chain" id="PRO_1000143177" description="Small ribosomal subunit protein uS15">
    <location>
        <begin position="1"/>
        <end position="89"/>
    </location>
</feature>
<sequence length="89" mass="10535">MAISKEKKNEIIAQYARHEGDTGSVEVQVAVLTWEINHLNEHIKQHKKDHATYRGLMKKIGRRRNLLAYLRKNDVNRYRELINSLGLRR</sequence>
<keyword id="KW-0687">Ribonucleoprotein</keyword>
<keyword id="KW-0689">Ribosomal protein</keyword>
<keyword id="KW-0694">RNA-binding</keyword>
<keyword id="KW-0699">rRNA-binding</keyword>
<accession>B5E6Q4</accession>
<reference key="1">
    <citation type="journal article" date="2001" name="Microb. Drug Resist.">
        <title>Annotated draft genomic sequence from a Streptococcus pneumoniae type 19F clinical isolate.</title>
        <authorList>
            <person name="Dopazo J."/>
            <person name="Mendoza A."/>
            <person name="Herrero J."/>
            <person name="Caldara F."/>
            <person name="Humbert Y."/>
            <person name="Friedli L."/>
            <person name="Guerrier M."/>
            <person name="Grand-Schenk E."/>
            <person name="Gandin C."/>
            <person name="de Francesco M."/>
            <person name="Polissi A."/>
            <person name="Buell G."/>
            <person name="Feger G."/>
            <person name="Garcia E."/>
            <person name="Peitsch M."/>
            <person name="Garcia-Bustos J.F."/>
        </authorList>
    </citation>
    <scope>NUCLEOTIDE SEQUENCE [LARGE SCALE GENOMIC DNA]</scope>
    <source>
        <strain>G54</strain>
    </source>
</reference>
<reference key="2">
    <citation type="submission" date="2008-03" db="EMBL/GenBank/DDBJ databases">
        <title>Pneumococcal beta glucoside metabolism investigated by whole genome comparison.</title>
        <authorList>
            <person name="Mulas L."/>
            <person name="Trappetti C."/>
            <person name="Hakenbeck R."/>
            <person name="Iannelli F."/>
            <person name="Pozzi G."/>
            <person name="Davidsen T.M."/>
            <person name="Tettelin H."/>
            <person name="Oggioni M."/>
        </authorList>
    </citation>
    <scope>NUCLEOTIDE SEQUENCE [LARGE SCALE GENOMIC DNA]</scope>
    <source>
        <strain>G54</strain>
    </source>
</reference>
<organism>
    <name type="scientific">Streptococcus pneumoniae serotype 19F (strain G54)</name>
    <dbReference type="NCBI Taxonomy" id="512566"/>
    <lineage>
        <taxon>Bacteria</taxon>
        <taxon>Bacillati</taxon>
        <taxon>Bacillota</taxon>
        <taxon>Bacilli</taxon>
        <taxon>Lactobacillales</taxon>
        <taxon>Streptococcaceae</taxon>
        <taxon>Streptococcus</taxon>
    </lineage>
</organism>
<comment type="function">
    <text evidence="1">One of the primary rRNA binding proteins, it binds directly to 16S rRNA where it helps nucleate assembly of the platform of the 30S subunit by binding and bridging several RNA helices of the 16S rRNA.</text>
</comment>
<comment type="function">
    <text evidence="1">Forms an intersubunit bridge (bridge B4) with the 23S rRNA of the 50S subunit in the ribosome.</text>
</comment>
<comment type="subunit">
    <text evidence="1">Part of the 30S ribosomal subunit. Forms a bridge to the 50S subunit in the 70S ribosome, contacting the 23S rRNA.</text>
</comment>
<comment type="similarity">
    <text evidence="1">Belongs to the universal ribosomal protein uS15 family.</text>
</comment>
<proteinExistence type="inferred from homology"/>
<protein>
    <recommendedName>
        <fullName evidence="1">Small ribosomal subunit protein uS15</fullName>
    </recommendedName>
    <alternativeName>
        <fullName evidence="2">30S ribosomal protein S15</fullName>
    </alternativeName>
</protein>